<reference key="1">
    <citation type="journal article" date="1999" name="Genetics">
        <title>Divergence of the hyperthermophilic archaea Pyrococcus furiosus and P. horikoshii inferred from complete genomic sequences.</title>
        <authorList>
            <person name="Maeder D.L."/>
            <person name="Weiss R.B."/>
            <person name="Dunn D.M."/>
            <person name="Cherry J.L."/>
            <person name="Gonzalez J.M."/>
            <person name="DiRuggiero J."/>
            <person name="Robb F.T."/>
        </authorList>
    </citation>
    <scope>NUCLEOTIDE SEQUENCE [LARGE SCALE GENOMIC DNA]</scope>
    <source>
        <strain>ATCC 43587 / DSM 3638 / JCM 8422 / Vc1</strain>
    </source>
</reference>
<dbReference type="EC" id="1.3.1.14"/>
<dbReference type="EMBL" id="AE009950">
    <property type="protein sequence ID" value="AAL81663.1"/>
    <property type="molecule type" value="Genomic_DNA"/>
</dbReference>
<dbReference type="RefSeq" id="WP_011012686.1">
    <property type="nucleotide sequence ID" value="NZ_CP023154.1"/>
</dbReference>
<dbReference type="SMR" id="Q8U0P6"/>
<dbReference type="STRING" id="186497.PF1539"/>
<dbReference type="PaxDb" id="186497-PF1539"/>
<dbReference type="KEGG" id="pfu:PF1539"/>
<dbReference type="PATRIC" id="fig|186497.12.peg.1605"/>
<dbReference type="eggNOG" id="arCOG00603">
    <property type="taxonomic scope" value="Archaea"/>
</dbReference>
<dbReference type="HOGENOM" id="CLU_042042_0_1_2"/>
<dbReference type="OrthoDB" id="36608at2157"/>
<dbReference type="PhylomeDB" id="Q8U0P6"/>
<dbReference type="UniPathway" id="UPA00070">
    <property type="reaction ID" value="UER00945"/>
</dbReference>
<dbReference type="Proteomes" id="UP000001013">
    <property type="component" value="Chromosome"/>
</dbReference>
<dbReference type="GO" id="GO:0005737">
    <property type="term" value="C:cytoplasm"/>
    <property type="evidence" value="ECO:0007669"/>
    <property type="project" value="UniProtKB-SubCell"/>
</dbReference>
<dbReference type="GO" id="GO:0004589">
    <property type="term" value="F:dihydroorotate dehydrogenase (NAD+) activity"/>
    <property type="evidence" value="ECO:0007669"/>
    <property type="project" value="UniProtKB-EC"/>
</dbReference>
<dbReference type="GO" id="GO:0006207">
    <property type="term" value="P:'de novo' pyrimidine nucleobase biosynthetic process"/>
    <property type="evidence" value="ECO:0007669"/>
    <property type="project" value="InterPro"/>
</dbReference>
<dbReference type="GO" id="GO:0044205">
    <property type="term" value="P:'de novo' UMP biosynthetic process"/>
    <property type="evidence" value="ECO:0007669"/>
    <property type="project" value="UniProtKB-UniRule"/>
</dbReference>
<dbReference type="CDD" id="cd04740">
    <property type="entry name" value="DHOD_1B_like"/>
    <property type="match status" value="1"/>
</dbReference>
<dbReference type="FunFam" id="3.20.20.70:FF:000027">
    <property type="entry name" value="Dihydropyrimidine dehydrogenase [NADP(+)]"/>
    <property type="match status" value="1"/>
</dbReference>
<dbReference type="Gene3D" id="3.20.20.70">
    <property type="entry name" value="Aldolase class I"/>
    <property type="match status" value="1"/>
</dbReference>
<dbReference type="HAMAP" id="MF_00224">
    <property type="entry name" value="DHO_dh_type1"/>
    <property type="match status" value="1"/>
</dbReference>
<dbReference type="InterPro" id="IPR013785">
    <property type="entry name" value="Aldolase_TIM"/>
</dbReference>
<dbReference type="InterPro" id="IPR033888">
    <property type="entry name" value="DHOD_1B"/>
</dbReference>
<dbReference type="InterPro" id="IPR024920">
    <property type="entry name" value="Dihydroorotate_DH_1"/>
</dbReference>
<dbReference type="InterPro" id="IPR012135">
    <property type="entry name" value="Dihydroorotate_DH_1_2"/>
</dbReference>
<dbReference type="InterPro" id="IPR005720">
    <property type="entry name" value="Dihydroorotate_DH_cat"/>
</dbReference>
<dbReference type="InterPro" id="IPR001295">
    <property type="entry name" value="Dihydroorotate_DH_CS"/>
</dbReference>
<dbReference type="InterPro" id="IPR049622">
    <property type="entry name" value="Dihydroorotate_DH_I"/>
</dbReference>
<dbReference type="NCBIfam" id="NF005574">
    <property type="entry name" value="PRK07259.1"/>
    <property type="match status" value="1"/>
</dbReference>
<dbReference type="NCBIfam" id="TIGR01037">
    <property type="entry name" value="pyrD_sub1_fam"/>
    <property type="match status" value="1"/>
</dbReference>
<dbReference type="PANTHER" id="PTHR43073">
    <property type="entry name" value="DIHYDROPYRIMIDINE DEHYDROGENASE [NADP(+)]"/>
    <property type="match status" value="1"/>
</dbReference>
<dbReference type="PANTHER" id="PTHR43073:SF2">
    <property type="entry name" value="DIHYDROPYRIMIDINE DEHYDROGENASE [NADP(+)]"/>
    <property type="match status" value="1"/>
</dbReference>
<dbReference type="Pfam" id="PF01180">
    <property type="entry name" value="DHO_dh"/>
    <property type="match status" value="1"/>
</dbReference>
<dbReference type="PIRSF" id="PIRSF000164">
    <property type="entry name" value="DHO_oxidase"/>
    <property type="match status" value="1"/>
</dbReference>
<dbReference type="SUPFAM" id="SSF51395">
    <property type="entry name" value="FMN-linked oxidoreductases"/>
    <property type="match status" value="1"/>
</dbReference>
<dbReference type="PROSITE" id="PS00911">
    <property type="entry name" value="DHODEHASE_1"/>
    <property type="match status" value="1"/>
</dbReference>
<dbReference type="PROSITE" id="PS00912">
    <property type="entry name" value="DHODEHASE_2"/>
    <property type="match status" value="1"/>
</dbReference>
<accession>Q8U0P6</accession>
<keyword id="KW-0963">Cytoplasm</keyword>
<keyword id="KW-0285">Flavoprotein</keyword>
<keyword id="KW-0288">FMN</keyword>
<keyword id="KW-0520">NAD</keyword>
<keyword id="KW-0560">Oxidoreductase</keyword>
<keyword id="KW-0665">Pyrimidine biosynthesis</keyword>
<keyword id="KW-1185">Reference proteome</keyword>
<organism>
    <name type="scientific">Pyrococcus furiosus (strain ATCC 43587 / DSM 3638 / JCM 8422 / Vc1)</name>
    <dbReference type="NCBI Taxonomy" id="186497"/>
    <lineage>
        <taxon>Archaea</taxon>
        <taxon>Methanobacteriati</taxon>
        <taxon>Methanobacteriota</taxon>
        <taxon>Thermococci</taxon>
        <taxon>Thermococcales</taxon>
        <taxon>Thermococcaceae</taxon>
        <taxon>Pyrococcus</taxon>
    </lineage>
</organism>
<proteinExistence type="inferred from homology"/>
<sequence>MSIKIELFGITFENPLILASGVVDMTPELLRRAHKEGAGGVVTKSIGIEPRKGYDNPTVVEVPCGLINAMGLPNPGWKAFLEEFEKESFDFPVIVSIFGGNPEEFAFLAEKLERVGDAFELNLSCPHAKGYGLEIGQDPENVYRVVKAVKDVTDKPVIAKLTPNTSDITKLGLAAEKAEADGVSAINTLKAIAIDIYAKRPILSNKFGGYSGPGIKPIALRAVYDLASKLDIPIIGIGGITTWQDAVEFLLAGASAVQIGTAVYLKGFSVFREIAEGIRKYLEEEGFSSVKEIIGLAQKV</sequence>
<feature type="chain" id="PRO_0000148413" description="Dihydroorotate dehydrogenase B (NAD(+)), catalytic subunit">
    <location>
        <begin position="1"/>
        <end position="300"/>
    </location>
</feature>
<feature type="active site" description="Nucleophile">
    <location>
        <position position="125"/>
    </location>
</feature>
<feature type="binding site" evidence="1">
    <location>
        <position position="20"/>
    </location>
    <ligand>
        <name>FMN</name>
        <dbReference type="ChEBI" id="CHEBI:58210"/>
    </ligand>
</feature>
<feature type="binding site" evidence="1">
    <location>
        <begin position="44"/>
        <end position="45"/>
    </location>
    <ligand>
        <name>FMN</name>
        <dbReference type="ChEBI" id="CHEBI:58210"/>
    </ligand>
</feature>
<feature type="binding site" evidence="1">
    <location>
        <position position="44"/>
    </location>
    <ligand>
        <name>substrate</name>
    </ligand>
</feature>
<feature type="binding site" evidence="1">
    <location>
        <begin position="68"/>
        <end position="72"/>
    </location>
    <ligand>
        <name>substrate</name>
    </ligand>
</feature>
<feature type="binding site" evidence="1">
    <location>
        <position position="122"/>
    </location>
    <ligand>
        <name>FMN</name>
        <dbReference type="ChEBI" id="CHEBI:58210"/>
    </ligand>
</feature>
<feature type="binding site" evidence="1">
    <location>
        <position position="122"/>
    </location>
    <ligand>
        <name>substrate</name>
    </ligand>
</feature>
<feature type="binding site" evidence="1">
    <location>
        <position position="160"/>
    </location>
    <ligand>
        <name>FMN</name>
        <dbReference type="ChEBI" id="CHEBI:58210"/>
    </ligand>
</feature>
<feature type="binding site" evidence="1">
    <location>
        <position position="186"/>
    </location>
    <ligand>
        <name>FMN</name>
        <dbReference type="ChEBI" id="CHEBI:58210"/>
    </ligand>
</feature>
<feature type="binding site" evidence="1">
    <location>
        <begin position="187"/>
        <end position="188"/>
    </location>
    <ligand>
        <name>substrate</name>
    </ligand>
</feature>
<feature type="binding site" evidence="1">
    <location>
        <position position="212"/>
    </location>
    <ligand>
        <name>FMN</name>
        <dbReference type="ChEBI" id="CHEBI:58210"/>
    </ligand>
</feature>
<feature type="binding site" evidence="1">
    <location>
        <begin position="238"/>
        <end position="239"/>
    </location>
    <ligand>
        <name>FMN</name>
        <dbReference type="ChEBI" id="CHEBI:58210"/>
    </ligand>
</feature>
<feature type="binding site" evidence="1">
    <location>
        <begin position="260"/>
        <end position="261"/>
    </location>
    <ligand>
        <name>FMN</name>
        <dbReference type="ChEBI" id="CHEBI:58210"/>
    </ligand>
</feature>
<comment type="function">
    <text evidence="1">Catalyzes the conversion of dihydroorotate to orotate with NAD(+) as electron acceptor.</text>
</comment>
<comment type="catalytic activity">
    <reaction>
        <text>(S)-dihydroorotate + NAD(+) = orotate + NADH + H(+)</text>
        <dbReference type="Rhea" id="RHEA:13513"/>
        <dbReference type="ChEBI" id="CHEBI:15378"/>
        <dbReference type="ChEBI" id="CHEBI:30839"/>
        <dbReference type="ChEBI" id="CHEBI:30864"/>
        <dbReference type="ChEBI" id="CHEBI:57540"/>
        <dbReference type="ChEBI" id="CHEBI:57945"/>
        <dbReference type="EC" id="1.3.1.14"/>
    </reaction>
</comment>
<comment type="cofactor">
    <cofactor evidence="1">
        <name>FMN</name>
        <dbReference type="ChEBI" id="CHEBI:58210"/>
    </cofactor>
    <text evidence="1">Binds 1 FMN per subunit.</text>
</comment>
<comment type="pathway">
    <text>Pyrimidine metabolism; UMP biosynthesis via de novo pathway; orotate from (S)-dihydroorotate (NAD(+) route): step 1/1.</text>
</comment>
<comment type="subunit">
    <text evidence="1">Heterotetramer of 2 PyrK and 2 PyrD type B subunits.</text>
</comment>
<comment type="subcellular location">
    <subcellularLocation>
        <location evidence="1">Cytoplasm</location>
    </subcellularLocation>
</comment>
<comment type="similarity">
    <text evidence="2">Belongs to the dihydroorotate dehydrogenase family. Type 1 subfamily.</text>
</comment>
<evidence type="ECO:0000250" key="1"/>
<evidence type="ECO:0000305" key="2"/>
<name>PYRDB_PYRFU</name>
<gene>
    <name type="primary">pyrD</name>
    <name type="ordered locus">PF1539</name>
</gene>
<protein>
    <recommendedName>
        <fullName>Dihydroorotate dehydrogenase B (NAD(+)), catalytic subunit</fullName>
        <shortName>DHOD B</shortName>
        <shortName>DHODase B</shortName>
        <shortName>DHOdehase B</shortName>
        <ecNumber>1.3.1.14</ecNumber>
    </recommendedName>
    <alternativeName>
        <fullName>Dihydroorotate oxidase B</fullName>
    </alternativeName>
    <alternativeName>
        <fullName>Orotate reductase (NADH)</fullName>
    </alternativeName>
</protein>